<feature type="chain" id="PRO_1000134493" description="Acetyl-coenzyme A carboxylase carboxyl transferase subunit alpha">
    <location>
        <begin position="1"/>
        <end position="315"/>
    </location>
</feature>
<feature type="domain" description="CoA carboxyltransferase C-terminal" evidence="2">
    <location>
        <begin position="35"/>
        <end position="289"/>
    </location>
</feature>
<evidence type="ECO:0000255" key="1">
    <source>
        <dbReference type="HAMAP-Rule" id="MF_00823"/>
    </source>
</evidence>
<evidence type="ECO:0000255" key="2">
    <source>
        <dbReference type="PROSITE-ProRule" id="PRU01137"/>
    </source>
</evidence>
<sequence>MNYLDFESKIKEIEDKITSLSHVFEDEKTEAEIKKLSKKRFELMESTYSKLTDWQVVQLSRHPDRPYFKDLLPLIFTDFQELHGDRTFGDDLAVIGGLAKLNNKPVMVIGQEKGRDTKSKIKHNFGMMHPEGYRKALRLMKLAEKFNMPVVTFIDTPGAYPGIKAEERGQSEAIARNLLEMSALKVPVVCIVIGEGCSGGALGIGVGDRLLMLQYSYFATISPEGCASILHKTAEKASEVTQMMNITSGRLKELKIVDEVIPEPLGGAHRDYETTATNIRKAVAAELKILSEMTVGQRNSRRYDKLMSFGRFKEA</sequence>
<dbReference type="EC" id="2.1.3.15" evidence="1"/>
<dbReference type="EMBL" id="CP000915">
    <property type="protein sequence ID" value="ACD30433.1"/>
    <property type="molecule type" value="Genomic_DNA"/>
</dbReference>
<dbReference type="SMR" id="B2SEQ7"/>
<dbReference type="KEGG" id="ftm:FTM_0399"/>
<dbReference type="HOGENOM" id="CLU_015486_0_2_6"/>
<dbReference type="UniPathway" id="UPA00655">
    <property type="reaction ID" value="UER00711"/>
</dbReference>
<dbReference type="GO" id="GO:0009317">
    <property type="term" value="C:acetyl-CoA carboxylase complex"/>
    <property type="evidence" value="ECO:0007669"/>
    <property type="project" value="InterPro"/>
</dbReference>
<dbReference type="GO" id="GO:0003989">
    <property type="term" value="F:acetyl-CoA carboxylase activity"/>
    <property type="evidence" value="ECO:0007669"/>
    <property type="project" value="InterPro"/>
</dbReference>
<dbReference type="GO" id="GO:0005524">
    <property type="term" value="F:ATP binding"/>
    <property type="evidence" value="ECO:0007669"/>
    <property type="project" value="UniProtKB-KW"/>
</dbReference>
<dbReference type="GO" id="GO:0016743">
    <property type="term" value="F:carboxyl- or carbamoyltransferase activity"/>
    <property type="evidence" value="ECO:0007669"/>
    <property type="project" value="UniProtKB-UniRule"/>
</dbReference>
<dbReference type="GO" id="GO:0006633">
    <property type="term" value="P:fatty acid biosynthetic process"/>
    <property type="evidence" value="ECO:0007669"/>
    <property type="project" value="UniProtKB-KW"/>
</dbReference>
<dbReference type="GO" id="GO:2001295">
    <property type="term" value="P:malonyl-CoA biosynthetic process"/>
    <property type="evidence" value="ECO:0007669"/>
    <property type="project" value="UniProtKB-UniRule"/>
</dbReference>
<dbReference type="Gene3D" id="3.90.226.10">
    <property type="entry name" value="2-enoyl-CoA Hydratase, Chain A, domain 1"/>
    <property type="match status" value="1"/>
</dbReference>
<dbReference type="HAMAP" id="MF_00823">
    <property type="entry name" value="AcetylCoA_CT_alpha"/>
    <property type="match status" value="1"/>
</dbReference>
<dbReference type="InterPro" id="IPR001095">
    <property type="entry name" value="Acetyl_CoA_COase_a_su"/>
</dbReference>
<dbReference type="InterPro" id="IPR029045">
    <property type="entry name" value="ClpP/crotonase-like_dom_sf"/>
</dbReference>
<dbReference type="InterPro" id="IPR011763">
    <property type="entry name" value="COA_CT_C"/>
</dbReference>
<dbReference type="NCBIfam" id="TIGR00513">
    <property type="entry name" value="accA"/>
    <property type="match status" value="1"/>
</dbReference>
<dbReference type="NCBIfam" id="NF041504">
    <property type="entry name" value="AccA_sub"/>
    <property type="match status" value="1"/>
</dbReference>
<dbReference type="NCBIfam" id="NF004344">
    <property type="entry name" value="PRK05724.1"/>
    <property type="match status" value="1"/>
</dbReference>
<dbReference type="PANTHER" id="PTHR42853">
    <property type="entry name" value="ACETYL-COENZYME A CARBOXYLASE CARBOXYL TRANSFERASE SUBUNIT ALPHA"/>
    <property type="match status" value="1"/>
</dbReference>
<dbReference type="PANTHER" id="PTHR42853:SF3">
    <property type="entry name" value="ACETYL-COENZYME A CARBOXYLASE CARBOXYL TRANSFERASE SUBUNIT ALPHA, CHLOROPLASTIC"/>
    <property type="match status" value="1"/>
</dbReference>
<dbReference type="Pfam" id="PF03255">
    <property type="entry name" value="ACCA"/>
    <property type="match status" value="1"/>
</dbReference>
<dbReference type="PRINTS" id="PR01069">
    <property type="entry name" value="ACCCTRFRASEA"/>
</dbReference>
<dbReference type="SUPFAM" id="SSF52096">
    <property type="entry name" value="ClpP/crotonase"/>
    <property type="match status" value="1"/>
</dbReference>
<dbReference type="PROSITE" id="PS50989">
    <property type="entry name" value="COA_CT_CTER"/>
    <property type="match status" value="1"/>
</dbReference>
<organism>
    <name type="scientific">Francisella tularensis subsp. mediasiatica (strain FSC147)</name>
    <dbReference type="NCBI Taxonomy" id="441952"/>
    <lineage>
        <taxon>Bacteria</taxon>
        <taxon>Pseudomonadati</taxon>
        <taxon>Pseudomonadota</taxon>
        <taxon>Gammaproteobacteria</taxon>
        <taxon>Thiotrichales</taxon>
        <taxon>Francisellaceae</taxon>
        <taxon>Francisella</taxon>
    </lineage>
</organism>
<gene>
    <name evidence="1" type="primary">accA</name>
    <name type="ordered locus">FTM_0399</name>
</gene>
<protein>
    <recommendedName>
        <fullName evidence="1">Acetyl-coenzyme A carboxylase carboxyl transferase subunit alpha</fullName>
        <shortName evidence="1">ACCase subunit alpha</shortName>
        <shortName evidence="1">Acetyl-CoA carboxylase carboxyltransferase subunit alpha</shortName>
        <ecNumber evidence="1">2.1.3.15</ecNumber>
    </recommendedName>
</protein>
<accession>B2SEQ7</accession>
<comment type="function">
    <text evidence="1">Component of the acetyl coenzyme A carboxylase (ACC) complex. First, biotin carboxylase catalyzes the carboxylation of biotin on its carrier protein (BCCP) and then the CO(2) group is transferred by the carboxyltransferase to acetyl-CoA to form malonyl-CoA.</text>
</comment>
<comment type="catalytic activity">
    <reaction evidence="1">
        <text>N(6)-carboxybiotinyl-L-lysyl-[protein] + acetyl-CoA = N(6)-biotinyl-L-lysyl-[protein] + malonyl-CoA</text>
        <dbReference type="Rhea" id="RHEA:54728"/>
        <dbReference type="Rhea" id="RHEA-COMP:10505"/>
        <dbReference type="Rhea" id="RHEA-COMP:10506"/>
        <dbReference type="ChEBI" id="CHEBI:57288"/>
        <dbReference type="ChEBI" id="CHEBI:57384"/>
        <dbReference type="ChEBI" id="CHEBI:83144"/>
        <dbReference type="ChEBI" id="CHEBI:83145"/>
        <dbReference type="EC" id="2.1.3.15"/>
    </reaction>
</comment>
<comment type="pathway">
    <text evidence="1">Lipid metabolism; malonyl-CoA biosynthesis; malonyl-CoA from acetyl-CoA: step 1/1.</text>
</comment>
<comment type="subunit">
    <text evidence="1">Acetyl-CoA carboxylase is a heterohexamer composed of biotin carboxyl carrier protein (AccB), biotin carboxylase (AccC) and two subunits each of ACCase subunit alpha (AccA) and ACCase subunit beta (AccD).</text>
</comment>
<comment type="subcellular location">
    <subcellularLocation>
        <location evidence="1">Cytoplasm</location>
    </subcellularLocation>
</comment>
<comment type="similarity">
    <text evidence="1">Belongs to the AccA family.</text>
</comment>
<name>ACCA_FRATM</name>
<proteinExistence type="inferred from homology"/>
<keyword id="KW-0067">ATP-binding</keyword>
<keyword id="KW-0963">Cytoplasm</keyword>
<keyword id="KW-0275">Fatty acid biosynthesis</keyword>
<keyword id="KW-0276">Fatty acid metabolism</keyword>
<keyword id="KW-0444">Lipid biosynthesis</keyword>
<keyword id="KW-0443">Lipid metabolism</keyword>
<keyword id="KW-0547">Nucleotide-binding</keyword>
<keyword id="KW-0808">Transferase</keyword>
<reference key="1">
    <citation type="journal article" date="2009" name="PLoS Pathog.">
        <title>Molecular evolutionary consequences of niche restriction in Francisella tularensis, a facultative intracellular pathogen.</title>
        <authorList>
            <person name="Larsson P."/>
            <person name="Elfsmark D."/>
            <person name="Svensson K."/>
            <person name="Wikstroem P."/>
            <person name="Forsman M."/>
            <person name="Brettin T."/>
            <person name="Keim P."/>
            <person name="Johansson A."/>
        </authorList>
    </citation>
    <scope>NUCLEOTIDE SEQUENCE [LARGE SCALE GENOMIC DNA]</scope>
    <source>
        <strain>FSC147</strain>
    </source>
</reference>